<feature type="chain" id="PRO_0000191208" description="Chaperone protein ClpB">
    <location>
        <begin position="1"/>
        <end position="861"/>
    </location>
</feature>
<feature type="domain" description="Clp R" evidence="2">
    <location>
        <begin position="3"/>
        <end position="146"/>
    </location>
</feature>
<feature type="region of interest" description="Repeat 1" evidence="2">
    <location>
        <begin position="6"/>
        <end position="71"/>
    </location>
</feature>
<feature type="region of interest" description="Repeat 2" evidence="2">
    <location>
        <begin position="83"/>
        <end position="146"/>
    </location>
</feature>
<feature type="region of interest" description="NBD1" evidence="1">
    <location>
        <begin position="159"/>
        <end position="340"/>
    </location>
</feature>
<feature type="region of interest" description="Linker" evidence="1">
    <location>
        <begin position="341"/>
        <end position="545"/>
    </location>
</feature>
<feature type="region of interest" description="NBD2" evidence="1">
    <location>
        <begin position="555"/>
        <end position="768"/>
    </location>
</feature>
<feature type="region of interest" description="C-terminal" evidence="1">
    <location>
        <begin position="769"/>
        <end position="861"/>
    </location>
</feature>
<feature type="coiled-coil region" evidence="1">
    <location>
        <begin position="391"/>
        <end position="525"/>
    </location>
</feature>
<feature type="binding site" evidence="1">
    <location>
        <begin position="206"/>
        <end position="213"/>
    </location>
    <ligand>
        <name>ATP</name>
        <dbReference type="ChEBI" id="CHEBI:30616"/>
        <label>1</label>
    </ligand>
</feature>
<feature type="binding site" evidence="1">
    <location>
        <begin position="605"/>
        <end position="612"/>
    </location>
    <ligand>
        <name>ATP</name>
        <dbReference type="ChEBI" id="CHEBI:30616"/>
        <label>2</label>
    </ligand>
</feature>
<evidence type="ECO:0000250" key="1"/>
<evidence type="ECO:0000255" key="2">
    <source>
        <dbReference type="PROSITE-ProRule" id="PRU01251"/>
    </source>
</evidence>
<evidence type="ECO:0000305" key="3"/>
<dbReference type="EMBL" id="AE003849">
    <property type="protein sequence ID" value="AAF83191.1"/>
    <property type="molecule type" value="Genomic_DNA"/>
</dbReference>
<dbReference type="PIR" id="D82814">
    <property type="entry name" value="D82814"/>
</dbReference>
<dbReference type="RefSeq" id="WP_010892912.1">
    <property type="nucleotide sequence ID" value="NC_002488.3"/>
</dbReference>
<dbReference type="SMR" id="Q9PGC1"/>
<dbReference type="STRING" id="160492.XF_0381"/>
<dbReference type="KEGG" id="xfa:XF_0381"/>
<dbReference type="eggNOG" id="COG0542">
    <property type="taxonomic scope" value="Bacteria"/>
</dbReference>
<dbReference type="HOGENOM" id="CLU_005070_4_1_6"/>
<dbReference type="Proteomes" id="UP000000812">
    <property type="component" value="Chromosome"/>
</dbReference>
<dbReference type="GO" id="GO:0005737">
    <property type="term" value="C:cytoplasm"/>
    <property type="evidence" value="ECO:0007669"/>
    <property type="project" value="UniProtKB-SubCell"/>
</dbReference>
<dbReference type="GO" id="GO:0005524">
    <property type="term" value="F:ATP binding"/>
    <property type="evidence" value="ECO:0007669"/>
    <property type="project" value="UniProtKB-KW"/>
</dbReference>
<dbReference type="GO" id="GO:0016887">
    <property type="term" value="F:ATP hydrolysis activity"/>
    <property type="evidence" value="ECO:0007669"/>
    <property type="project" value="InterPro"/>
</dbReference>
<dbReference type="GO" id="GO:0034605">
    <property type="term" value="P:cellular response to heat"/>
    <property type="evidence" value="ECO:0007669"/>
    <property type="project" value="TreeGrafter"/>
</dbReference>
<dbReference type="GO" id="GO:0042026">
    <property type="term" value="P:protein refolding"/>
    <property type="evidence" value="ECO:0007669"/>
    <property type="project" value="InterPro"/>
</dbReference>
<dbReference type="CDD" id="cd00009">
    <property type="entry name" value="AAA"/>
    <property type="match status" value="1"/>
</dbReference>
<dbReference type="CDD" id="cd19499">
    <property type="entry name" value="RecA-like_ClpB_Hsp104-like"/>
    <property type="match status" value="1"/>
</dbReference>
<dbReference type="FunFam" id="1.10.1780.10:FF:000003">
    <property type="entry name" value="ATP-dependent chaperone ClpB"/>
    <property type="match status" value="1"/>
</dbReference>
<dbReference type="FunFam" id="1.10.8.60:FF:000017">
    <property type="entry name" value="ATP-dependent chaperone ClpB"/>
    <property type="match status" value="1"/>
</dbReference>
<dbReference type="FunFam" id="3.40.50.300:FF:000120">
    <property type="entry name" value="ATP-dependent chaperone ClpB"/>
    <property type="match status" value="1"/>
</dbReference>
<dbReference type="FunFam" id="3.40.50.300:FF:000025">
    <property type="entry name" value="ATP-dependent Clp protease subunit"/>
    <property type="match status" value="1"/>
</dbReference>
<dbReference type="FunFam" id="3.40.50.300:FF:000010">
    <property type="entry name" value="Chaperone clpB 1, putative"/>
    <property type="match status" value="1"/>
</dbReference>
<dbReference type="Gene3D" id="1.10.8.60">
    <property type="match status" value="1"/>
</dbReference>
<dbReference type="Gene3D" id="1.10.1780.10">
    <property type="entry name" value="Clp, N-terminal domain"/>
    <property type="match status" value="1"/>
</dbReference>
<dbReference type="Gene3D" id="3.40.50.300">
    <property type="entry name" value="P-loop containing nucleotide triphosphate hydrolases"/>
    <property type="match status" value="3"/>
</dbReference>
<dbReference type="InterPro" id="IPR003593">
    <property type="entry name" value="AAA+_ATPase"/>
</dbReference>
<dbReference type="InterPro" id="IPR003959">
    <property type="entry name" value="ATPase_AAA_core"/>
</dbReference>
<dbReference type="InterPro" id="IPR017730">
    <property type="entry name" value="Chaperonin_ClpB"/>
</dbReference>
<dbReference type="InterPro" id="IPR019489">
    <property type="entry name" value="Clp_ATPase_C"/>
</dbReference>
<dbReference type="InterPro" id="IPR036628">
    <property type="entry name" value="Clp_N_dom_sf"/>
</dbReference>
<dbReference type="InterPro" id="IPR004176">
    <property type="entry name" value="Clp_R_dom"/>
</dbReference>
<dbReference type="InterPro" id="IPR001270">
    <property type="entry name" value="ClpA/B"/>
</dbReference>
<dbReference type="InterPro" id="IPR018368">
    <property type="entry name" value="ClpA/B_CS1"/>
</dbReference>
<dbReference type="InterPro" id="IPR028299">
    <property type="entry name" value="ClpA/B_CS2"/>
</dbReference>
<dbReference type="InterPro" id="IPR041546">
    <property type="entry name" value="ClpA/ClpB_AAA_lid"/>
</dbReference>
<dbReference type="InterPro" id="IPR050130">
    <property type="entry name" value="ClpA_ClpB"/>
</dbReference>
<dbReference type="InterPro" id="IPR027417">
    <property type="entry name" value="P-loop_NTPase"/>
</dbReference>
<dbReference type="NCBIfam" id="TIGR03346">
    <property type="entry name" value="chaperone_ClpB"/>
    <property type="match status" value="1"/>
</dbReference>
<dbReference type="NCBIfam" id="NF008118">
    <property type="entry name" value="PRK10865.1"/>
    <property type="match status" value="1"/>
</dbReference>
<dbReference type="PANTHER" id="PTHR11638">
    <property type="entry name" value="ATP-DEPENDENT CLP PROTEASE"/>
    <property type="match status" value="1"/>
</dbReference>
<dbReference type="PANTHER" id="PTHR11638:SF18">
    <property type="entry name" value="HEAT SHOCK PROTEIN 104"/>
    <property type="match status" value="1"/>
</dbReference>
<dbReference type="Pfam" id="PF00004">
    <property type="entry name" value="AAA"/>
    <property type="match status" value="1"/>
</dbReference>
<dbReference type="Pfam" id="PF07724">
    <property type="entry name" value="AAA_2"/>
    <property type="match status" value="1"/>
</dbReference>
<dbReference type="Pfam" id="PF17871">
    <property type="entry name" value="AAA_lid_9"/>
    <property type="match status" value="1"/>
</dbReference>
<dbReference type="Pfam" id="PF02861">
    <property type="entry name" value="Clp_N"/>
    <property type="match status" value="2"/>
</dbReference>
<dbReference type="Pfam" id="PF10431">
    <property type="entry name" value="ClpB_D2-small"/>
    <property type="match status" value="1"/>
</dbReference>
<dbReference type="PRINTS" id="PR00300">
    <property type="entry name" value="CLPPROTEASEA"/>
</dbReference>
<dbReference type="SMART" id="SM00382">
    <property type="entry name" value="AAA"/>
    <property type="match status" value="2"/>
</dbReference>
<dbReference type="SMART" id="SM01086">
    <property type="entry name" value="ClpB_D2-small"/>
    <property type="match status" value="1"/>
</dbReference>
<dbReference type="SUPFAM" id="SSF81923">
    <property type="entry name" value="Double Clp-N motif"/>
    <property type="match status" value="1"/>
</dbReference>
<dbReference type="SUPFAM" id="SSF52540">
    <property type="entry name" value="P-loop containing nucleoside triphosphate hydrolases"/>
    <property type="match status" value="2"/>
</dbReference>
<dbReference type="PROSITE" id="PS51903">
    <property type="entry name" value="CLP_R"/>
    <property type="match status" value="1"/>
</dbReference>
<dbReference type="PROSITE" id="PS00870">
    <property type="entry name" value="CLPAB_1"/>
    <property type="match status" value="1"/>
</dbReference>
<dbReference type="PROSITE" id="PS00871">
    <property type="entry name" value="CLPAB_2"/>
    <property type="match status" value="1"/>
</dbReference>
<keyword id="KW-0067">ATP-binding</keyword>
<keyword id="KW-0143">Chaperone</keyword>
<keyword id="KW-0175">Coiled coil</keyword>
<keyword id="KW-0963">Cytoplasm</keyword>
<keyword id="KW-0547">Nucleotide-binding</keyword>
<keyword id="KW-0677">Repeat</keyword>
<keyword id="KW-0346">Stress response</keyword>
<name>CLPB_XYLFA</name>
<comment type="function">
    <text evidence="1">Part of a stress-induced multi-chaperone system, it is involved in the recovery of the cell from heat-induced damage, in cooperation with DnaK, DnaJ and GrpE. Acts before DnaK, in the processing of protein aggregates. Protein binding stimulates the ATPase activity; ATP hydrolysis unfolds the denatured protein aggregates, which probably helps expose new hydrophobic binding sites on the surface of ClpB-bound aggregates, contributing to the solubilization and refolding of denatured protein aggregates by DnaK (By similarity).</text>
</comment>
<comment type="subunit">
    <text evidence="1">Homohexamer. The oligomerization is ATP-dependent (By similarity).</text>
</comment>
<comment type="subcellular location">
    <subcellularLocation>
        <location evidence="3">Cytoplasm</location>
    </subcellularLocation>
</comment>
<comment type="domain">
    <text evidence="1">The Clp repeat (R) domain probably functions as a substrate-discriminating domain, recruiting aggregated proteins to the ClpB hexamer and/or stabilizing bound proteins. The NBD2 domain is responsible for oligomerization, whereas the NBD1 domain stabilizes the hexamer probably in an ATP-dependent manner. The movement of the coiled-coil domain is essential for ClpB ability to rescue proteins from an aggregated state, probably by pulling apart large aggregated proteins, which are bound between the coiled-coils motifs of adjacent ClpB subunits in the functional hexamer (By similarity).</text>
</comment>
<comment type="similarity">
    <text evidence="3">Belongs to the ClpA/ClpB family.</text>
</comment>
<gene>
    <name type="primary">clpB</name>
    <name type="ordered locus">XF_0381</name>
</gene>
<sequence>MRMDKLTSRFQNALADAQSLAVGRDHTIIEPVHVFSALLDQQGGSTRPLLMQAGVNVPLLRERLTEILEALPKVSGQTVNVSPSNELSRLFHRTDKLAQQHGDQFMASEWFVLAVVDDSGGLGQALRAAGAEKKKIEAAIDKLRGGETVQTENAEEQRQALEKYTIDLTARAESGKLDPVIGRDEEIRRTIQVLQRRTKNNPVLIGEPGVGKTAIVEGLAQRIVNGEVPEGLRSKRLLSLDLGALIAGAKFRGEFEERLKGVLNDLAKNEGRVILFIDELHTMVGAGKADGAMDAGNMLKPALARGELHCIGATTLDEYRKYIEKDAALERRFQKVFVGEPTVEDTIAILRGLKEKYALHHGVEITDPAIVAAATLSNRYITDRQLPDKAIDLMDEAASRIRMEIDSKPEELDRLERRLIQLKIQREMLKKEKDEASKQRLADLERDIEVLDREFSDLEEVWRSEKAALQGATKIKESIEQAKLDLEAAQRRQDYAKMSEIQYGVLPALEKQLVAASQAEQHDFTLVQEKVTAEEIAEVVSRWTGIPVSKMLEGERDKLLRMEADLGRRVVGQEEAIKVVSDAVRRSRTGLSDPNRPSGSFLFLGPTGVGKTELCKALAEFLFDSQDAMVRIDMSEFMEKHSVARLIGAPPGYVGYEEGGYLTELVRRRPYSLILLDEVEKAHSDVFNILLQVLDDGRLTDGQGRTVDFRNTVIVMTSNLGSHQIQELSGDDSPEVYTQMKAAVMEVVQAHFRPEFINRLDDIVVFHPLDKAQIKQIARIQLQGLEKRLAESELKLDLDDRALELLGNVGFDPVYGARPLKRAIQSQLENPLAQQILAEAFVSGDTVQVGVDGGKLVFAKV</sequence>
<organism>
    <name type="scientific">Xylella fastidiosa (strain 9a5c)</name>
    <dbReference type="NCBI Taxonomy" id="160492"/>
    <lineage>
        <taxon>Bacteria</taxon>
        <taxon>Pseudomonadati</taxon>
        <taxon>Pseudomonadota</taxon>
        <taxon>Gammaproteobacteria</taxon>
        <taxon>Lysobacterales</taxon>
        <taxon>Lysobacteraceae</taxon>
        <taxon>Xylella</taxon>
    </lineage>
</organism>
<proteinExistence type="inferred from homology"/>
<protein>
    <recommendedName>
        <fullName>Chaperone protein ClpB</fullName>
    </recommendedName>
</protein>
<accession>Q9PGC1</accession>
<reference key="1">
    <citation type="journal article" date="2000" name="Nature">
        <title>The genome sequence of the plant pathogen Xylella fastidiosa.</title>
        <authorList>
            <person name="Simpson A.J.G."/>
            <person name="Reinach F.C."/>
            <person name="Arruda P."/>
            <person name="Abreu F.A."/>
            <person name="Acencio M."/>
            <person name="Alvarenga R."/>
            <person name="Alves L.M.C."/>
            <person name="Araya J.E."/>
            <person name="Baia G.S."/>
            <person name="Baptista C.S."/>
            <person name="Barros M.H."/>
            <person name="Bonaccorsi E.D."/>
            <person name="Bordin S."/>
            <person name="Bove J.M."/>
            <person name="Briones M.R.S."/>
            <person name="Bueno M.R.P."/>
            <person name="Camargo A.A."/>
            <person name="Camargo L.E.A."/>
            <person name="Carraro D.M."/>
            <person name="Carrer H."/>
            <person name="Colauto N.B."/>
            <person name="Colombo C."/>
            <person name="Costa F.F."/>
            <person name="Costa M.C.R."/>
            <person name="Costa-Neto C.M."/>
            <person name="Coutinho L.L."/>
            <person name="Cristofani M."/>
            <person name="Dias-Neto E."/>
            <person name="Docena C."/>
            <person name="El-Dorry H."/>
            <person name="Facincani A.P."/>
            <person name="Ferreira A.J.S."/>
            <person name="Ferreira V.C.A."/>
            <person name="Ferro J.A."/>
            <person name="Fraga J.S."/>
            <person name="Franca S.C."/>
            <person name="Franco M.C."/>
            <person name="Frohme M."/>
            <person name="Furlan L.R."/>
            <person name="Garnier M."/>
            <person name="Goldman G.H."/>
            <person name="Goldman M.H.S."/>
            <person name="Gomes S.L."/>
            <person name="Gruber A."/>
            <person name="Ho P.L."/>
            <person name="Hoheisel J.D."/>
            <person name="Junqueira M.L."/>
            <person name="Kemper E.L."/>
            <person name="Kitajima J.P."/>
            <person name="Krieger J.E."/>
            <person name="Kuramae E.E."/>
            <person name="Laigret F."/>
            <person name="Lambais M.R."/>
            <person name="Leite L.C.C."/>
            <person name="Lemos E.G.M."/>
            <person name="Lemos M.V.F."/>
            <person name="Lopes S.A."/>
            <person name="Lopes C.R."/>
            <person name="Machado J.A."/>
            <person name="Machado M.A."/>
            <person name="Madeira A.M.B.N."/>
            <person name="Madeira H.M.F."/>
            <person name="Marino C.L."/>
            <person name="Marques M.V."/>
            <person name="Martins E.A.L."/>
            <person name="Martins E.M.F."/>
            <person name="Matsukuma A.Y."/>
            <person name="Menck C.F.M."/>
            <person name="Miracca E.C."/>
            <person name="Miyaki C.Y."/>
            <person name="Monteiro-Vitorello C.B."/>
            <person name="Moon D.H."/>
            <person name="Nagai M.A."/>
            <person name="Nascimento A.L.T.O."/>
            <person name="Netto L.E.S."/>
            <person name="Nhani A. Jr."/>
            <person name="Nobrega F.G."/>
            <person name="Nunes L.R."/>
            <person name="Oliveira M.A."/>
            <person name="de Oliveira M.C."/>
            <person name="de Oliveira R.C."/>
            <person name="Palmieri D.A."/>
            <person name="Paris A."/>
            <person name="Peixoto B.R."/>
            <person name="Pereira G.A.G."/>
            <person name="Pereira H.A. Jr."/>
            <person name="Pesquero J.B."/>
            <person name="Quaggio R.B."/>
            <person name="Roberto P.G."/>
            <person name="Rodrigues V."/>
            <person name="de Rosa A.J.M."/>
            <person name="de Rosa V.E. Jr."/>
            <person name="de Sa R.G."/>
            <person name="Santelli R.V."/>
            <person name="Sawasaki H.E."/>
            <person name="da Silva A.C.R."/>
            <person name="da Silva A.M."/>
            <person name="da Silva F.R."/>
            <person name="Silva W.A. Jr."/>
            <person name="da Silveira J.F."/>
            <person name="Silvestri M.L.Z."/>
            <person name="Siqueira W.J."/>
            <person name="de Souza A.A."/>
            <person name="de Souza A.P."/>
            <person name="Terenzi M.F."/>
            <person name="Truffi D."/>
            <person name="Tsai S.M."/>
            <person name="Tsuhako M.H."/>
            <person name="Vallada H."/>
            <person name="Van Sluys M.A."/>
            <person name="Verjovski-Almeida S."/>
            <person name="Vettore A.L."/>
            <person name="Zago M.A."/>
            <person name="Zatz M."/>
            <person name="Meidanis J."/>
            <person name="Setubal J.C."/>
        </authorList>
    </citation>
    <scope>NUCLEOTIDE SEQUENCE [LARGE SCALE GENOMIC DNA]</scope>
    <source>
        <strain>9a5c</strain>
    </source>
</reference>